<dbReference type="EMBL" id="AE000511">
    <property type="protein sequence ID" value="AAD08025.1"/>
    <property type="molecule type" value="Genomic_DNA"/>
</dbReference>
<dbReference type="PIR" id="C64642">
    <property type="entry name" value="C64642"/>
</dbReference>
<dbReference type="RefSeq" id="NP_207770.1">
    <property type="nucleotide sequence ID" value="NC_000915.1"/>
</dbReference>
<dbReference type="RefSeq" id="WP_000233600.1">
    <property type="nucleotide sequence ID" value="NC_018939.1"/>
</dbReference>
<dbReference type="SMR" id="P56097"/>
<dbReference type="DIP" id="DIP-3610N"/>
<dbReference type="FunCoup" id="P56097">
    <property type="interactions" value="369"/>
</dbReference>
<dbReference type="IntAct" id="P56097">
    <property type="interactions" value="4"/>
</dbReference>
<dbReference type="MINT" id="P56097"/>
<dbReference type="STRING" id="85962.HP_0979"/>
<dbReference type="PaxDb" id="85962-C694_05040"/>
<dbReference type="EnsemblBacteria" id="AAD08025">
    <property type="protein sequence ID" value="AAD08025"/>
    <property type="gene ID" value="HP_0979"/>
</dbReference>
<dbReference type="KEGG" id="heo:C694_05040"/>
<dbReference type="KEGG" id="hpy:HP_0979"/>
<dbReference type="PATRIC" id="fig|85962.47.peg.1047"/>
<dbReference type="eggNOG" id="COG0206">
    <property type="taxonomic scope" value="Bacteria"/>
</dbReference>
<dbReference type="InParanoid" id="P56097"/>
<dbReference type="OrthoDB" id="9813375at2"/>
<dbReference type="PhylomeDB" id="P56097"/>
<dbReference type="Proteomes" id="UP000000429">
    <property type="component" value="Chromosome"/>
</dbReference>
<dbReference type="GO" id="GO:0032153">
    <property type="term" value="C:cell division site"/>
    <property type="evidence" value="ECO:0000318"/>
    <property type="project" value="GO_Central"/>
</dbReference>
<dbReference type="GO" id="GO:0005737">
    <property type="term" value="C:cytoplasm"/>
    <property type="evidence" value="ECO:0000318"/>
    <property type="project" value="GO_Central"/>
</dbReference>
<dbReference type="GO" id="GO:0005525">
    <property type="term" value="F:GTP binding"/>
    <property type="evidence" value="ECO:0000318"/>
    <property type="project" value="GO_Central"/>
</dbReference>
<dbReference type="GO" id="GO:0003924">
    <property type="term" value="F:GTPase activity"/>
    <property type="evidence" value="ECO:0000318"/>
    <property type="project" value="GO_Central"/>
</dbReference>
<dbReference type="GO" id="GO:0051301">
    <property type="term" value="P:cell division"/>
    <property type="evidence" value="ECO:0000318"/>
    <property type="project" value="GO_Central"/>
</dbReference>
<dbReference type="GO" id="GO:0000917">
    <property type="term" value="P:division septum assembly"/>
    <property type="evidence" value="ECO:0007669"/>
    <property type="project" value="UniProtKB-KW"/>
</dbReference>
<dbReference type="GO" id="GO:0043093">
    <property type="term" value="P:FtsZ-dependent cytokinesis"/>
    <property type="evidence" value="ECO:0007669"/>
    <property type="project" value="UniProtKB-UniRule"/>
</dbReference>
<dbReference type="GO" id="GO:0051258">
    <property type="term" value="P:protein polymerization"/>
    <property type="evidence" value="ECO:0007669"/>
    <property type="project" value="UniProtKB-UniRule"/>
</dbReference>
<dbReference type="CDD" id="cd02201">
    <property type="entry name" value="FtsZ_type1"/>
    <property type="match status" value="1"/>
</dbReference>
<dbReference type="FunFam" id="3.40.50.1440:FF:000029">
    <property type="entry name" value="Cell division protein FtsZ"/>
    <property type="match status" value="1"/>
</dbReference>
<dbReference type="Gene3D" id="3.30.1330.20">
    <property type="entry name" value="Tubulin/FtsZ, C-terminal domain"/>
    <property type="match status" value="1"/>
</dbReference>
<dbReference type="Gene3D" id="3.40.50.1440">
    <property type="entry name" value="Tubulin/FtsZ, GTPase domain"/>
    <property type="match status" value="1"/>
</dbReference>
<dbReference type="HAMAP" id="MF_00909">
    <property type="entry name" value="FtsZ"/>
    <property type="match status" value="1"/>
</dbReference>
<dbReference type="InterPro" id="IPR000158">
    <property type="entry name" value="Cell_div_FtsZ"/>
</dbReference>
<dbReference type="InterPro" id="IPR020805">
    <property type="entry name" value="Cell_div_FtsZ_CS"/>
</dbReference>
<dbReference type="InterPro" id="IPR045061">
    <property type="entry name" value="FtsZ/CetZ"/>
</dbReference>
<dbReference type="InterPro" id="IPR024757">
    <property type="entry name" value="FtsZ_C"/>
</dbReference>
<dbReference type="InterPro" id="IPR008280">
    <property type="entry name" value="Tub_FtsZ_C"/>
</dbReference>
<dbReference type="InterPro" id="IPR037103">
    <property type="entry name" value="Tubulin/FtsZ-like_C"/>
</dbReference>
<dbReference type="InterPro" id="IPR018316">
    <property type="entry name" value="Tubulin/FtsZ_2-layer-sand-dom"/>
</dbReference>
<dbReference type="InterPro" id="IPR036525">
    <property type="entry name" value="Tubulin/FtsZ_GTPase_sf"/>
</dbReference>
<dbReference type="InterPro" id="IPR003008">
    <property type="entry name" value="Tubulin_FtsZ_GTPase"/>
</dbReference>
<dbReference type="NCBIfam" id="TIGR00065">
    <property type="entry name" value="ftsZ"/>
    <property type="match status" value="1"/>
</dbReference>
<dbReference type="PANTHER" id="PTHR30314">
    <property type="entry name" value="CELL DIVISION PROTEIN FTSZ-RELATED"/>
    <property type="match status" value="1"/>
</dbReference>
<dbReference type="PANTHER" id="PTHR30314:SF3">
    <property type="entry name" value="MITOCHONDRIAL DIVISION PROTEIN FSZA"/>
    <property type="match status" value="1"/>
</dbReference>
<dbReference type="Pfam" id="PF12327">
    <property type="entry name" value="FtsZ_C"/>
    <property type="match status" value="1"/>
</dbReference>
<dbReference type="Pfam" id="PF00091">
    <property type="entry name" value="Tubulin"/>
    <property type="match status" value="1"/>
</dbReference>
<dbReference type="PRINTS" id="PR00423">
    <property type="entry name" value="CELLDVISFTSZ"/>
</dbReference>
<dbReference type="SMART" id="SM00864">
    <property type="entry name" value="Tubulin"/>
    <property type="match status" value="1"/>
</dbReference>
<dbReference type="SMART" id="SM00865">
    <property type="entry name" value="Tubulin_C"/>
    <property type="match status" value="1"/>
</dbReference>
<dbReference type="SUPFAM" id="SSF55307">
    <property type="entry name" value="Tubulin C-terminal domain-like"/>
    <property type="match status" value="1"/>
</dbReference>
<dbReference type="SUPFAM" id="SSF52490">
    <property type="entry name" value="Tubulin nucleotide-binding domain-like"/>
    <property type="match status" value="1"/>
</dbReference>
<dbReference type="PROSITE" id="PS01134">
    <property type="entry name" value="FTSZ_1"/>
    <property type="match status" value="1"/>
</dbReference>
<dbReference type="PROSITE" id="PS01135">
    <property type="entry name" value="FTSZ_2"/>
    <property type="match status" value="1"/>
</dbReference>
<organism>
    <name type="scientific">Helicobacter pylori (strain ATCC 700392 / 26695)</name>
    <name type="common">Campylobacter pylori</name>
    <dbReference type="NCBI Taxonomy" id="85962"/>
    <lineage>
        <taxon>Bacteria</taxon>
        <taxon>Pseudomonadati</taxon>
        <taxon>Campylobacterota</taxon>
        <taxon>Epsilonproteobacteria</taxon>
        <taxon>Campylobacterales</taxon>
        <taxon>Helicobacteraceae</taxon>
        <taxon>Helicobacter</taxon>
    </lineage>
</organism>
<proteinExistence type="inferred from homology"/>
<reference key="1">
    <citation type="journal article" date="1997" name="Nature">
        <title>The complete genome sequence of the gastric pathogen Helicobacter pylori.</title>
        <authorList>
            <person name="Tomb J.-F."/>
            <person name="White O."/>
            <person name="Kerlavage A.R."/>
            <person name="Clayton R.A."/>
            <person name="Sutton G.G."/>
            <person name="Fleischmann R.D."/>
            <person name="Ketchum K.A."/>
            <person name="Klenk H.-P."/>
            <person name="Gill S.R."/>
            <person name="Dougherty B.A."/>
            <person name="Nelson K.E."/>
            <person name="Quackenbush J."/>
            <person name="Zhou L."/>
            <person name="Kirkness E.F."/>
            <person name="Peterson S.N."/>
            <person name="Loftus B.J."/>
            <person name="Richardson D.L."/>
            <person name="Dodson R.J."/>
            <person name="Khalak H.G."/>
            <person name="Glodek A."/>
            <person name="McKenney K."/>
            <person name="FitzGerald L.M."/>
            <person name="Lee N."/>
            <person name="Adams M.D."/>
            <person name="Hickey E.K."/>
            <person name="Berg D.E."/>
            <person name="Gocayne J.D."/>
            <person name="Utterback T.R."/>
            <person name="Peterson J.D."/>
            <person name="Kelley J.M."/>
            <person name="Cotton M.D."/>
            <person name="Weidman J.F."/>
            <person name="Fujii C."/>
            <person name="Bowman C."/>
            <person name="Watthey L."/>
            <person name="Wallin E."/>
            <person name="Hayes W.S."/>
            <person name="Borodovsky M."/>
            <person name="Karp P.D."/>
            <person name="Smith H.O."/>
            <person name="Fraser C.M."/>
            <person name="Venter J.C."/>
        </authorList>
    </citation>
    <scope>NUCLEOTIDE SEQUENCE [LARGE SCALE GENOMIC DNA]</scope>
    <source>
        <strain>ATCC 700392 / 26695</strain>
    </source>
</reference>
<keyword id="KW-0131">Cell cycle</keyword>
<keyword id="KW-0132">Cell division</keyword>
<keyword id="KW-0963">Cytoplasm</keyword>
<keyword id="KW-0342">GTP-binding</keyword>
<keyword id="KW-0547">Nucleotide-binding</keyword>
<keyword id="KW-1185">Reference proteome</keyword>
<keyword id="KW-0717">Septation</keyword>
<evidence type="ECO:0000255" key="1">
    <source>
        <dbReference type="HAMAP-Rule" id="MF_00909"/>
    </source>
</evidence>
<name>FTSZ_HELPY</name>
<comment type="function">
    <text evidence="1">Essential cell division protein that forms a contractile ring structure (Z ring) at the future cell division site. The regulation of the ring assembly controls the timing and the location of cell division. One of the functions of the FtsZ ring is to recruit other cell division proteins to the septum to produce a new cell wall between the dividing cells. Binds GTP and shows GTPase activity.</text>
</comment>
<comment type="subunit">
    <text evidence="1">Homodimer. Polymerizes to form a dynamic ring structure in a strictly GTP-dependent manner. Interacts directly with several other division proteins.</text>
</comment>
<comment type="subcellular location">
    <subcellularLocation>
        <location evidence="1">Cytoplasm</location>
    </subcellularLocation>
    <text evidence="1">Assembles at midcell at the inner surface of the cytoplasmic membrane.</text>
</comment>
<comment type="similarity">
    <text evidence="1">Belongs to the FtsZ family.</text>
</comment>
<gene>
    <name evidence="1" type="primary">ftsZ</name>
    <name type="ordered locus">HP_0979</name>
</gene>
<sequence length="385" mass="40954">MVHQSEMENYNIGQASIEEVSDPAYKGAKIVVIGVGGGGSNMIKHLVEYGVHQDVTPIATNTDGQHLKNNPAPVKILLGKESTGGLGAGGIPDIGRKAAEESANEIKEAIKDAKLVIISTGLGGGTGTGATPTIVKIAKEVGALTIAIVTKPFKYEGNQKRKRAEEGLKELEQSSDSILVIPNDKILLTMKKNASTTECYREVDDVLVRAVSGISTIITKPGNINVDFADLKSALGFKGFALMGIGEATGEESAKLAVQNAIQSPLLDDASIEGAKSIIVFFEHHPDYPMMAYSQACDFIQDQAHQDVDVKFGQHTSDNIPIDHVRVTIIATGAERNSGGASLESIATPSQPVVKQTRKVGNGEYLKIPTEEELSIPTTMRIQQD</sequence>
<accession>P56097</accession>
<feature type="chain" id="PRO_0000114356" description="Cell division protein FtsZ">
    <location>
        <begin position="1"/>
        <end position="385"/>
    </location>
</feature>
<feature type="binding site" evidence="1">
    <location>
        <begin position="37"/>
        <end position="41"/>
    </location>
    <ligand>
        <name>GTP</name>
        <dbReference type="ChEBI" id="CHEBI:37565"/>
    </ligand>
</feature>
<feature type="binding site" evidence="1">
    <location>
        <begin position="125"/>
        <end position="127"/>
    </location>
    <ligand>
        <name>GTP</name>
        <dbReference type="ChEBI" id="CHEBI:37565"/>
    </ligand>
</feature>
<feature type="binding site" evidence="1">
    <location>
        <position position="156"/>
    </location>
    <ligand>
        <name>GTP</name>
        <dbReference type="ChEBI" id="CHEBI:37565"/>
    </ligand>
</feature>
<feature type="binding site" evidence="1">
    <location>
        <position position="160"/>
    </location>
    <ligand>
        <name>GTP</name>
        <dbReference type="ChEBI" id="CHEBI:37565"/>
    </ligand>
</feature>
<feature type="binding site" evidence="1">
    <location>
        <position position="204"/>
    </location>
    <ligand>
        <name>GTP</name>
        <dbReference type="ChEBI" id="CHEBI:37565"/>
    </ligand>
</feature>
<protein>
    <recommendedName>
        <fullName evidence="1">Cell division protein FtsZ</fullName>
    </recommendedName>
</protein>